<protein>
    <recommendedName>
        <fullName>Uncharacterized protein DDB_G0282307</fullName>
    </recommendedName>
</protein>
<reference key="1">
    <citation type="journal article" date="2005" name="Nature">
        <title>The genome of the social amoeba Dictyostelium discoideum.</title>
        <authorList>
            <person name="Eichinger L."/>
            <person name="Pachebat J.A."/>
            <person name="Gloeckner G."/>
            <person name="Rajandream M.A."/>
            <person name="Sucgang R."/>
            <person name="Berriman M."/>
            <person name="Song J."/>
            <person name="Olsen R."/>
            <person name="Szafranski K."/>
            <person name="Xu Q."/>
            <person name="Tunggal B."/>
            <person name="Kummerfeld S."/>
            <person name="Madera M."/>
            <person name="Konfortov B.A."/>
            <person name="Rivero F."/>
            <person name="Bankier A.T."/>
            <person name="Lehmann R."/>
            <person name="Hamlin N."/>
            <person name="Davies R."/>
            <person name="Gaudet P."/>
            <person name="Fey P."/>
            <person name="Pilcher K."/>
            <person name="Chen G."/>
            <person name="Saunders D."/>
            <person name="Sodergren E.J."/>
            <person name="Davis P."/>
            <person name="Kerhornou A."/>
            <person name="Nie X."/>
            <person name="Hall N."/>
            <person name="Anjard C."/>
            <person name="Hemphill L."/>
            <person name="Bason N."/>
            <person name="Farbrother P."/>
            <person name="Desany B."/>
            <person name="Just E."/>
            <person name="Morio T."/>
            <person name="Rost R."/>
            <person name="Churcher C.M."/>
            <person name="Cooper J."/>
            <person name="Haydock S."/>
            <person name="van Driessche N."/>
            <person name="Cronin A."/>
            <person name="Goodhead I."/>
            <person name="Muzny D.M."/>
            <person name="Mourier T."/>
            <person name="Pain A."/>
            <person name="Lu M."/>
            <person name="Harper D."/>
            <person name="Lindsay R."/>
            <person name="Hauser H."/>
            <person name="James K.D."/>
            <person name="Quiles M."/>
            <person name="Madan Babu M."/>
            <person name="Saito T."/>
            <person name="Buchrieser C."/>
            <person name="Wardroper A."/>
            <person name="Felder M."/>
            <person name="Thangavelu M."/>
            <person name="Johnson D."/>
            <person name="Knights A."/>
            <person name="Loulseged H."/>
            <person name="Mungall K.L."/>
            <person name="Oliver K."/>
            <person name="Price C."/>
            <person name="Quail M.A."/>
            <person name="Urushihara H."/>
            <person name="Hernandez J."/>
            <person name="Rabbinowitsch E."/>
            <person name="Steffen D."/>
            <person name="Sanders M."/>
            <person name="Ma J."/>
            <person name="Kohara Y."/>
            <person name="Sharp S."/>
            <person name="Simmonds M.N."/>
            <person name="Spiegler S."/>
            <person name="Tivey A."/>
            <person name="Sugano S."/>
            <person name="White B."/>
            <person name="Walker D."/>
            <person name="Woodward J.R."/>
            <person name="Winckler T."/>
            <person name="Tanaka Y."/>
            <person name="Shaulsky G."/>
            <person name="Schleicher M."/>
            <person name="Weinstock G.M."/>
            <person name="Rosenthal A."/>
            <person name="Cox E.C."/>
            <person name="Chisholm R.L."/>
            <person name="Gibbs R.A."/>
            <person name="Loomis W.F."/>
            <person name="Platzer M."/>
            <person name="Kay R.R."/>
            <person name="Williams J.G."/>
            <person name="Dear P.H."/>
            <person name="Noegel A.A."/>
            <person name="Barrell B.G."/>
            <person name="Kuspa A."/>
        </authorList>
    </citation>
    <scope>NUCLEOTIDE SEQUENCE [LARGE SCALE GENOMIC DNA]</scope>
    <source>
        <strain>AX4</strain>
    </source>
</reference>
<sequence length="96" mass="9619">MKFLSALLLIVLLISVVFGNTSGPSSAWATTTTGGTTGSQTSPATHGGHGGNGGNGHSNIDIHADVGLLDTLSVHARVKANVADTVNVKAKARVEA</sequence>
<name>Y4169_DICDI</name>
<comment type="subcellular location">
    <subcellularLocation>
        <location evidence="3">Secreted</location>
    </subcellularLocation>
</comment>
<gene>
    <name type="ORF">DDB_G0282307</name>
</gene>
<accession>Q54SQ3</accession>
<organism>
    <name type="scientific">Dictyostelium discoideum</name>
    <name type="common">Social amoeba</name>
    <dbReference type="NCBI Taxonomy" id="44689"/>
    <lineage>
        <taxon>Eukaryota</taxon>
        <taxon>Amoebozoa</taxon>
        <taxon>Evosea</taxon>
        <taxon>Eumycetozoa</taxon>
        <taxon>Dictyostelia</taxon>
        <taxon>Dictyosteliales</taxon>
        <taxon>Dictyosteliaceae</taxon>
        <taxon>Dictyostelium</taxon>
    </lineage>
</organism>
<dbReference type="EMBL" id="AAFI02000047">
    <property type="protein sequence ID" value="EAL66275.1"/>
    <property type="molecule type" value="Genomic_DNA"/>
</dbReference>
<dbReference type="RefSeq" id="XP_640248.1">
    <property type="nucleotide sequence ID" value="XM_635156.1"/>
</dbReference>
<dbReference type="GlyGen" id="Q54SQ3">
    <property type="glycosylation" value="1 site"/>
</dbReference>
<dbReference type="PaxDb" id="44689-DDB0302642"/>
<dbReference type="EnsemblProtists" id="EAL66275">
    <property type="protein sequence ID" value="EAL66275"/>
    <property type="gene ID" value="DDB_G0282307"/>
</dbReference>
<dbReference type="GeneID" id="8623508"/>
<dbReference type="KEGG" id="ddi:DDB_G0282307"/>
<dbReference type="dictyBase" id="DDB_G0282307"/>
<dbReference type="HOGENOM" id="CLU_2364047_0_0_1"/>
<dbReference type="InParanoid" id="Q54SQ3"/>
<dbReference type="PRO" id="PR:Q54SQ3"/>
<dbReference type="Proteomes" id="UP000002195">
    <property type="component" value="Chromosome 3"/>
</dbReference>
<dbReference type="GO" id="GO:0005576">
    <property type="term" value="C:extracellular region"/>
    <property type="evidence" value="ECO:0007669"/>
    <property type="project" value="UniProtKB-SubCell"/>
</dbReference>
<feature type="signal peptide" evidence="1">
    <location>
        <begin position="1"/>
        <end position="19"/>
    </location>
</feature>
<feature type="chain" id="PRO_0000351228" description="Uncharacterized protein DDB_G0282307">
    <location>
        <begin position="20"/>
        <end position="96"/>
    </location>
</feature>
<feature type="region of interest" description="Disordered" evidence="2">
    <location>
        <begin position="27"/>
        <end position="58"/>
    </location>
</feature>
<feature type="compositionally biased region" description="Low complexity" evidence="2">
    <location>
        <begin position="27"/>
        <end position="46"/>
    </location>
</feature>
<feature type="compositionally biased region" description="Gly residues" evidence="2">
    <location>
        <begin position="47"/>
        <end position="56"/>
    </location>
</feature>
<feature type="glycosylation site" description="N-linked (GlcNAc...) asparagine" evidence="1">
    <location>
        <position position="20"/>
    </location>
</feature>
<proteinExistence type="inferred from homology"/>
<keyword id="KW-0325">Glycoprotein</keyword>
<keyword id="KW-1185">Reference proteome</keyword>
<keyword id="KW-0964">Secreted</keyword>
<keyword id="KW-0732">Signal</keyword>
<evidence type="ECO:0000255" key="1"/>
<evidence type="ECO:0000256" key="2">
    <source>
        <dbReference type="SAM" id="MobiDB-lite"/>
    </source>
</evidence>
<evidence type="ECO:0000305" key="3"/>